<reference key="1">
    <citation type="journal article" date="1996" name="Plant Mol. Biol.">
        <title>Isolation and characterization of a cDNA encoding a pea ornithine transcarbamoylase (argF) and comparison with other transcarbamoylases.</title>
        <authorList>
            <person name="Williamson C.L."/>
            <person name="Lake M.R."/>
            <person name="Slocum R.D."/>
        </authorList>
    </citation>
    <scope>NUCLEOTIDE SEQUENCE [MRNA]</scope>
    <source>
        <strain>cv. Wando</strain>
        <tissue>Leaf</tissue>
    </source>
</reference>
<feature type="transit peptide" description="Chloroplast">
    <location>
        <begin position="1"/>
        <end status="unknown"/>
    </location>
</feature>
<feature type="chain" id="PRO_0000020341" description="Ornithine carbamoyltransferase, chloroplastic">
    <location>
        <begin status="unknown"/>
        <end position="375"/>
    </location>
</feature>
<feature type="active site" description="Proton acceptor" evidence="1">
    <location>
        <position position="333"/>
    </location>
</feature>
<feature type="binding site" evidence="1">
    <location>
        <begin position="123"/>
        <end position="126"/>
    </location>
    <ligand>
        <name>carbamoyl phosphate</name>
        <dbReference type="ChEBI" id="CHEBI:58228"/>
    </ligand>
</feature>
<feature type="binding site" evidence="1">
    <location>
        <position position="174"/>
    </location>
    <ligand>
        <name>carbamoyl phosphate</name>
        <dbReference type="ChEBI" id="CHEBI:58228"/>
    </ligand>
</feature>
<feature type="binding site" evidence="1">
    <location>
        <position position="201"/>
    </location>
    <ligand>
        <name>carbamoyl phosphate</name>
        <dbReference type="ChEBI" id="CHEBI:58228"/>
    </ligand>
</feature>
<feature type="binding site" evidence="1">
    <location>
        <position position="204"/>
    </location>
    <ligand>
        <name>carbamoyl phosphate</name>
        <dbReference type="ChEBI" id="CHEBI:58228"/>
    </ligand>
</feature>
<feature type="binding site" evidence="1">
    <location>
        <position position="232"/>
    </location>
    <ligand>
        <name>L-ornithine</name>
        <dbReference type="ChEBI" id="CHEBI:46911"/>
    </ligand>
</feature>
<feature type="binding site" evidence="1">
    <location>
        <position position="293"/>
    </location>
    <ligand>
        <name>L-ornithine</name>
        <dbReference type="ChEBI" id="CHEBI:46911"/>
    </ligand>
</feature>
<feature type="binding site" evidence="1">
    <location>
        <position position="297"/>
    </location>
    <ligand>
        <name>L-ornithine</name>
        <dbReference type="ChEBI" id="CHEBI:46911"/>
    </ligand>
</feature>
<feature type="binding site" evidence="1">
    <location>
        <position position="298"/>
    </location>
    <ligand>
        <name>L-ornithine</name>
        <dbReference type="ChEBI" id="CHEBI:46911"/>
    </ligand>
</feature>
<feature type="binding site" evidence="1">
    <location>
        <begin position="333"/>
        <end position="334"/>
    </location>
    <ligand>
        <name>carbamoyl phosphate</name>
        <dbReference type="ChEBI" id="CHEBI:58228"/>
    </ligand>
</feature>
<feature type="binding site" evidence="1">
    <location>
        <position position="361"/>
    </location>
    <ligand>
        <name>carbamoyl phosphate</name>
        <dbReference type="ChEBI" id="CHEBI:58228"/>
    </ligand>
</feature>
<name>OTC_PEA</name>
<evidence type="ECO:0000250" key="1">
    <source>
        <dbReference type="UniProtKB" id="P00480"/>
    </source>
</evidence>
<evidence type="ECO:0000305" key="2"/>
<gene>
    <name type="primary">ARGF</name>
</gene>
<accession>Q43814</accession>
<proteinExistence type="evidence at transcript level"/>
<protein>
    <recommendedName>
        <fullName>Ornithine carbamoyltransferase, chloroplastic</fullName>
        <ecNumber>2.1.3.3</ecNumber>
    </recommendedName>
    <alternativeName>
        <fullName>Ornithine transcarbamylase</fullName>
        <shortName>OTCase</shortName>
    </alternativeName>
</protein>
<dbReference type="EC" id="2.1.3.3"/>
<dbReference type="EMBL" id="U13684">
    <property type="protein sequence ID" value="AAA74997.1"/>
    <property type="molecule type" value="mRNA"/>
</dbReference>
<dbReference type="PIR" id="T06436">
    <property type="entry name" value="T06436"/>
</dbReference>
<dbReference type="SMR" id="Q43814"/>
<dbReference type="OrthoDB" id="10252326at2759"/>
<dbReference type="GO" id="GO:0009507">
    <property type="term" value="C:chloroplast"/>
    <property type="evidence" value="ECO:0007669"/>
    <property type="project" value="UniProtKB-SubCell"/>
</dbReference>
<dbReference type="GO" id="GO:0016597">
    <property type="term" value="F:amino acid binding"/>
    <property type="evidence" value="ECO:0007669"/>
    <property type="project" value="InterPro"/>
</dbReference>
<dbReference type="GO" id="GO:0004585">
    <property type="term" value="F:ornithine carbamoyltransferase activity"/>
    <property type="evidence" value="ECO:0007669"/>
    <property type="project" value="UniProtKB-EC"/>
</dbReference>
<dbReference type="GO" id="GO:0042450">
    <property type="term" value="P:arginine biosynthetic process via ornithine"/>
    <property type="evidence" value="ECO:0007669"/>
    <property type="project" value="TreeGrafter"/>
</dbReference>
<dbReference type="GO" id="GO:0019240">
    <property type="term" value="P:citrulline biosynthetic process"/>
    <property type="evidence" value="ECO:0007669"/>
    <property type="project" value="TreeGrafter"/>
</dbReference>
<dbReference type="GO" id="GO:0006526">
    <property type="term" value="P:L-arginine biosynthetic process"/>
    <property type="evidence" value="ECO:0007669"/>
    <property type="project" value="UniProtKB-KW"/>
</dbReference>
<dbReference type="FunFam" id="3.40.50.1370:FF:000008">
    <property type="entry name" value="Ornithine carbamoyltransferase"/>
    <property type="match status" value="1"/>
</dbReference>
<dbReference type="FunFam" id="3.40.50.1370:FF:000015">
    <property type="entry name" value="ornithine carbamoyltransferase, chloroplastic"/>
    <property type="match status" value="1"/>
</dbReference>
<dbReference type="Gene3D" id="3.40.50.1370">
    <property type="entry name" value="Aspartate/ornithine carbamoyltransferase"/>
    <property type="match status" value="2"/>
</dbReference>
<dbReference type="HAMAP" id="MF_01109">
    <property type="entry name" value="OTCase"/>
    <property type="match status" value="1"/>
</dbReference>
<dbReference type="InterPro" id="IPR006132">
    <property type="entry name" value="Asp/Orn_carbamoyltranf_P-bd"/>
</dbReference>
<dbReference type="InterPro" id="IPR006130">
    <property type="entry name" value="Asp/Orn_carbamoylTrfase"/>
</dbReference>
<dbReference type="InterPro" id="IPR036901">
    <property type="entry name" value="Asp/Orn_carbamoylTrfase_sf"/>
</dbReference>
<dbReference type="InterPro" id="IPR006131">
    <property type="entry name" value="Asp_carbamoyltransf_Asp/Orn-bd"/>
</dbReference>
<dbReference type="InterPro" id="IPR002292">
    <property type="entry name" value="Orn/put_carbamltrans"/>
</dbReference>
<dbReference type="InterPro" id="IPR024904">
    <property type="entry name" value="OTCase_ArgI"/>
</dbReference>
<dbReference type="NCBIfam" id="TIGR00658">
    <property type="entry name" value="orni_carb_tr"/>
    <property type="match status" value="1"/>
</dbReference>
<dbReference type="NCBIfam" id="NF001986">
    <property type="entry name" value="PRK00779.1"/>
    <property type="match status" value="1"/>
</dbReference>
<dbReference type="PANTHER" id="PTHR45753">
    <property type="entry name" value="ORNITHINE CARBAMOYLTRANSFERASE, MITOCHONDRIAL"/>
    <property type="match status" value="1"/>
</dbReference>
<dbReference type="PANTHER" id="PTHR45753:SF3">
    <property type="entry name" value="ORNITHINE TRANSCARBAMYLASE, MITOCHONDRIAL"/>
    <property type="match status" value="1"/>
</dbReference>
<dbReference type="Pfam" id="PF00185">
    <property type="entry name" value="OTCace"/>
    <property type="match status" value="1"/>
</dbReference>
<dbReference type="Pfam" id="PF02729">
    <property type="entry name" value="OTCace_N"/>
    <property type="match status" value="1"/>
</dbReference>
<dbReference type="PRINTS" id="PR00100">
    <property type="entry name" value="AOTCASE"/>
</dbReference>
<dbReference type="PRINTS" id="PR00102">
    <property type="entry name" value="OTCASE"/>
</dbReference>
<dbReference type="SUPFAM" id="SSF53671">
    <property type="entry name" value="Aspartate/ornithine carbamoyltransferase"/>
    <property type="match status" value="1"/>
</dbReference>
<keyword id="KW-0028">Amino-acid biosynthesis</keyword>
<keyword id="KW-0055">Arginine biosynthesis</keyword>
<keyword id="KW-0150">Chloroplast</keyword>
<keyword id="KW-0934">Plastid</keyword>
<keyword id="KW-0808">Transferase</keyword>
<keyword id="KW-0809">Transit peptide</keyword>
<sequence length="375" mass="41356">MGVITAHCYCFTTVGSHKPYLSPSSHNFRHSPSVSLSSSSSSSPSPLRRISCQASSAPAAESTLTAKVGNGLKDFIHIDDFDKETILKILDRAIEVKTLLKSGDRTFRPFEGKTMSMIFAKPSMRTRVSFETGFSLLGGHAIYLGPNDIQMGKREETRDVARVLSRYNDIIMARVFSHQDILDLAKYASVPVINGLTDYNHPVQIMADALTMIEHIGRFEGTKVVYVGDGNNIVHSWLLLAAVVPFHFVCACPKGFEPDAKTVEKARKAGISKIEISHDPKEAVRGADVVYSDVWASMGQKEEAAYRREAFKGFQVDQNLMDAAGSKAFFMHCLPAERGVEVTDEVVEAPYSIVFPQAENRMHAQNAIMLHVLGK</sequence>
<organism>
    <name type="scientific">Pisum sativum</name>
    <name type="common">Garden pea</name>
    <name type="synonym">Lathyrus oleraceus</name>
    <dbReference type="NCBI Taxonomy" id="3888"/>
    <lineage>
        <taxon>Eukaryota</taxon>
        <taxon>Viridiplantae</taxon>
        <taxon>Streptophyta</taxon>
        <taxon>Embryophyta</taxon>
        <taxon>Tracheophyta</taxon>
        <taxon>Spermatophyta</taxon>
        <taxon>Magnoliopsida</taxon>
        <taxon>eudicotyledons</taxon>
        <taxon>Gunneridae</taxon>
        <taxon>Pentapetalae</taxon>
        <taxon>rosids</taxon>
        <taxon>fabids</taxon>
        <taxon>Fabales</taxon>
        <taxon>Fabaceae</taxon>
        <taxon>Papilionoideae</taxon>
        <taxon>50 kb inversion clade</taxon>
        <taxon>NPAAA clade</taxon>
        <taxon>Hologalegina</taxon>
        <taxon>IRL clade</taxon>
        <taxon>Fabeae</taxon>
        <taxon>Pisum</taxon>
    </lineage>
</organism>
<comment type="catalytic activity">
    <reaction>
        <text>carbamoyl phosphate + L-ornithine = L-citrulline + phosphate + H(+)</text>
        <dbReference type="Rhea" id="RHEA:19513"/>
        <dbReference type="ChEBI" id="CHEBI:15378"/>
        <dbReference type="ChEBI" id="CHEBI:43474"/>
        <dbReference type="ChEBI" id="CHEBI:46911"/>
        <dbReference type="ChEBI" id="CHEBI:57743"/>
        <dbReference type="ChEBI" id="CHEBI:58228"/>
        <dbReference type="EC" id="2.1.3.3"/>
    </reaction>
</comment>
<comment type="subunit">
    <text>Homotrimer.</text>
</comment>
<comment type="subcellular location">
    <subcellularLocation>
        <location>Plastid</location>
        <location>Chloroplast</location>
    </subcellularLocation>
</comment>
<comment type="similarity">
    <text evidence="2">Belongs to the aspartate/ornithine carbamoyltransferase superfamily. OTCase family.</text>
</comment>